<proteinExistence type="inferred from homology"/>
<dbReference type="EC" id="2.4.2.7" evidence="1"/>
<dbReference type="EMBL" id="CP000716">
    <property type="protein sequence ID" value="ABR31677.1"/>
    <property type="molecule type" value="Genomic_DNA"/>
</dbReference>
<dbReference type="SMR" id="A6LP26"/>
<dbReference type="STRING" id="391009.Tmel_1842"/>
<dbReference type="KEGG" id="tme:Tmel_1842"/>
<dbReference type="eggNOG" id="COG0503">
    <property type="taxonomic scope" value="Bacteria"/>
</dbReference>
<dbReference type="HOGENOM" id="CLU_063339_3_0_0"/>
<dbReference type="UniPathway" id="UPA00588">
    <property type="reaction ID" value="UER00646"/>
</dbReference>
<dbReference type="Proteomes" id="UP000001110">
    <property type="component" value="Chromosome"/>
</dbReference>
<dbReference type="GO" id="GO:0005737">
    <property type="term" value="C:cytoplasm"/>
    <property type="evidence" value="ECO:0007669"/>
    <property type="project" value="UniProtKB-SubCell"/>
</dbReference>
<dbReference type="GO" id="GO:0002055">
    <property type="term" value="F:adenine binding"/>
    <property type="evidence" value="ECO:0007669"/>
    <property type="project" value="TreeGrafter"/>
</dbReference>
<dbReference type="GO" id="GO:0003999">
    <property type="term" value="F:adenine phosphoribosyltransferase activity"/>
    <property type="evidence" value="ECO:0007669"/>
    <property type="project" value="UniProtKB-UniRule"/>
</dbReference>
<dbReference type="GO" id="GO:0016208">
    <property type="term" value="F:AMP binding"/>
    <property type="evidence" value="ECO:0007669"/>
    <property type="project" value="TreeGrafter"/>
</dbReference>
<dbReference type="GO" id="GO:0006168">
    <property type="term" value="P:adenine salvage"/>
    <property type="evidence" value="ECO:0007669"/>
    <property type="project" value="InterPro"/>
</dbReference>
<dbReference type="GO" id="GO:0044209">
    <property type="term" value="P:AMP salvage"/>
    <property type="evidence" value="ECO:0007669"/>
    <property type="project" value="UniProtKB-UniRule"/>
</dbReference>
<dbReference type="GO" id="GO:0006166">
    <property type="term" value="P:purine ribonucleoside salvage"/>
    <property type="evidence" value="ECO:0007669"/>
    <property type="project" value="UniProtKB-KW"/>
</dbReference>
<dbReference type="CDD" id="cd06223">
    <property type="entry name" value="PRTases_typeI"/>
    <property type="match status" value="1"/>
</dbReference>
<dbReference type="FunFam" id="3.40.50.2020:FF:000021">
    <property type="entry name" value="Adenine phosphoribosyltransferase"/>
    <property type="match status" value="1"/>
</dbReference>
<dbReference type="Gene3D" id="3.40.50.2020">
    <property type="match status" value="1"/>
</dbReference>
<dbReference type="HAMAP" id="MF_00004">
    <property type="entry name" value="Aden_phosphoribosyltr"/>
    <property type="match status" value="1"/>
</dbReference>
<dbReference type="InterPro" id="IPR005764">
    <property type="entry name" value="Ade_phspho_trans"/>
</dbReference>
<dbReference type="InterPro" id="IPR000836">
    <property type="entry name" value="PRibTrfase_dom"/>
</dbReference>
<dbReference type="InterPro" id="IPR029057">
    <property type="entry name" value="PRTase-like"/>
</dbReference>
<dbReference type="InterPro" id="IPR050054">
    <property type="entry name" value="UPRTase/APRTase"/>
</dbReference>
<dbReference type="NCBIfam" id="TIGR01090">
    <property type="entry name" value="apt"/>
    <property type="match status" value="1"/>
</dbReference>
<dbReference type="NCBIfam" id="NF002634">
    <property type="entry name" value="PRK02304.1-3"/>
    <property type="match status" value="1"/>
</dbReference>
<dbReference type="NCBIfam" id="NF002636">
    <property type="entry name" value="PRK02304.1-5"/>
    <property type="match status" value="1"/>
</dbReference>
<dbReference type="PANTHER" id="PTHR32315">
    <property type="entry name" value="ADENINE PHOSPHORIBOSYLTRANSFERASE"/>
    <property type="match status" value="1"/>
</dbReference>
<dbReference type="PANTHER" id="PTHR32315:SF3">
    <property type="entry name" value="ADENINE PHOSPHORIBOSYLTRANSFERASE"/>
    <property type="match status" value="1"/>
</dbReference>
<dbReference type="Pfam" id="PF00156">
    <property type="entry name" value="Pribosyltran"/>
    <property type="match status" value="1"/>
</dbReference>
<dbReference type="SUPFAM" id="SSF53271">
    <property type="entry name" value="PRTase-like"/>
    <property type="match status" value="1"/>
</dbReference>
<dbReference type="PROSITE" id="PS00103">
    <property type="entry name" value="PUR_PYR_PR_TRANSFER"/>
    <property type="match status" value="1"/>
</dbReference>
<name>APT_THEM4</name>
<evidence type="ECO:0000255" key="1">
    <source>
        <dbReference type="HAMAP-Rule" id="MF_00004"/>
    </source>
</evidence>
<feature type="chain" id="PRO_0000321418" description="Adenine phosphoribosyltransferase">
    <location>
        <begin position="1"/>
        <end position="175"/>
    </location>
</feature>
<reference key="1">
    <citation type="submission" date="2007-05" db="EMBL/GenBank/DDBJ databases">
        <title>Complete sequence of Thermosipho melanesiensis BI429.</title>
        <authorList>
            <consortium name="US DOE Joint Genome Institute"/>
            <person name="Copeland A."/>
            <person name="Lucas S."/>
            <person name="Lapidus A."/>
            <person name="Barry K."/>
            <person name="Glavina del Rio T."/>
            <person name="Dalin E."/>
            <person name="Tice H."/>
            <person name="Pitluck S."/>
            <person name="Chertkov O."/>
            <person name="Brettin T."/>
            <person name="Bruce D."/>
            <person name="Detter J.C."/>
            <person name="Han C."/>
            <person name="Schmutz J."/>
            <person name="Larimer F."/>
            <person name="Land M."/>
            <person name="Hauser L."/>
            <person name="Kyrpides N."/>
            <person name="Mikhailova N."/>
            <person name="Nelson K."/>
            <person name="Gogarten J.P."/>
            <person name="Noll K."/>
            <person name="Richardson P."/>
        </authorList>
    </citation>
    <scope>NUCLEOTIDE SEQUENCE [LARGE SCALE GENOMIC DNA]</scope>
    <source>
        <strain>DSM 12029 / CIP 104789 / BI429</strain>
    </source>
</reference>
<protein>
    <recommendedName>
        <fullName evidence="1">Adenine phosphoribosyltransferase</fullName>
        <shortName evidence="1">APRT</shortName>
        <ecNumber evidence="1">2.4.2.7</ecNumber>
    </recommendedName>
</protein>
<keyword id="KW-0963">Cytoplasm</keyword>
<keyword id="KW-0328">Glycosyltransferase</keyword>
<keyword id="KW-0660">Purine salvage</keyword>
<keyword id="KW-0808">Transferase</keyword>
<accession>A6LP26</accession>
<gene>
    <name evidence="1" type="primary">apt</name>
    <name type="ordered locus">Tmel_1842</name>
</gene>
<comment type="function">
    <text evidence="1">Catalyzes a salvage reaction resulting in the formation of AMP, that is energically less costly than de novo synthesis.</text>
</comment>
<comment type="catalytic activity">
    <reaction evidence="1">
        <text>AMP + diphosphate = 5-phospho-alpha-D-ribose 1-diphosphate + adenine</text>
        <dbReference type="Rhea" id="RHEA:16609"/>
        <dbReference type="ChEBI" id="CHEBI:16708"/>
        <dbReference type="ChEBI" id="CHEBI:33019"/>
        <dbReference type="ChEBI" id="CHEBI:58017"/>
        <dbReference type="ChEBI" id="CHEBI:456215"/>
        <dbReference type="EC" id="2.4.2.7"/>
    </reaction>
</comment>
<comment type="pathway">
    <text evidence="1">Purine metabolism; AMP biosynthesis via salvage pathway; AMP from adenine: step 1/1.</text>
</comment>
<comment type="subunit">
    <text evidence="1">Homodimer.</text>
</comment>
<comment type="subcellular location">
    <subcellularLocation>
        <location evidence="1">Cytoplasm</location>
    </subcellularLocation>
</comment>
<comment type="similarity">
    <text evidence="1">Belongs to the purine/pyrimidine phosphoribosyltransferase family.</text>
</comment>
<sequence>MEVPTLELKKFIRDIPDFPEKGIIFRDITPLLKNPEAFNFAIDQLVNKLKEIEFNTIVAPEARGFIFGGALAYKLGKGLVPVRKPGKLPYKVISEKYSLEYGEAELQMHIDAISQGEKVIIFDDVLATGGTALALKKLVEKAGGEVVSMAFLIELTYLNPRKLLSKENIISLITY</sequence>
<organism>
    <name type="scientific">Thermosipho melanesiensis (strain DSM 12029 / CIP 104789 / BI429)</name>
    <dbReference type="NCBI Taxonomy" id="391009"/>
    <lineage>
        <taxon>Bacteria</taxon>
        <taxon>Thermotogati</taxon>
        <taxon>Thermotogota</taxon>
        <taxon>Thermotogae</taxon>
        <taxon>Thermotogales</taxon>
        <taxon>Fervidobacteriaceae</taxon>
        <taxon>Thermosipho</taxon>
    </lineage>
</organism>